<reference key="1">
    <citation type="journal article" date="1990" name="Nucleic Acids Res.">
        <title>Bacteriophage T4 DNA packaging genes 16 and 17.</title>
        <authorList>
            <person name="Powell D."/>
            <person name="Franklin J."/>
            <person name="Arisaka F."/>
            <person name="Mosig G."/>
        </authorList>
    </citation>
    <scope>NUCLEOTIDE SEQUENCE [GENOMIC DNA]</scope>
    <source>
        <strain>D</strain>
    </source>
</reference>
<reference key="2">
    <citation type="journal article" date="2003" name="Microbiol. Mol. Biol. Rev.">
        <title>Bacteriophage T4 genome.</title>
        <authorList>
            <person name="Miller E.S."/>
            <person name="Kutter E."/>
            <person name="Mosig G."/>
            <person name="Arisaka F."/>
            <person name="Kunisawa T."/>
            <person name="Ruger W."/>
        </authorList>
    </citation>
    <scope>NUCLEOTIDE SEQUENCE [LARGE SCALE GENOMIC DNA]</scope>
</reference>
<reference key="3">
    <citation type="journal article" date="1994" name="Gene">
        <title>Structural analysis of DNA cleaved in vivo by bacteriophage T4 terminase.</title>
        <authorList>
            <person name="Bhattacharyya S.P."/>
            <person name="Rao V.B."/>
        </authorList>
    </citation>
    <scope>FUNCTION</scope>
    <scope>CATALYTIC ACTIVITY</scope>
    <scope>DNA-BINDING</scope>
</reference>
<reference key="4">
    <citation type="journal article" date="1996" name="Gene">
        <title>Expression of the bacteriophage T4 DNA terminase genes 16 and 17 yields multiple proteins.</title>
        <authorList>
            <person name="Franklin J.L."/>
            <person name="Mosig G."/>
        </authorList>
    </citation>
    <scope>ALTERNATIVE INITIATION</scope>
</reference>
<reference key="5">
    <citation type="journal article" date="1998" name="J. Mol. Biol.">
        <title>The largest (70 kDa) product of the bacteriophage T4 DNA terminase gene 17 binds to single-stranded DNA segments and digests them towards junctions with double-stranded DNA.</title>
        <authorList>
            <person name="Franklin J.L."/>
            <person name="Haseltine D."/>
            <person name="Davenport L."/>
            <person name="Mosig G."/>
        </authorList>
    </citation>
    <scope>FUNCTION</scope>
    <scope>DNA-BINDING</scope>
    <scope>CATALYTIC ACTIVITY</scope>
</reference>
<reference key="6">
    <citation type="journal article" date="1999" name="J. Mol. Biol.">
        <title>Analysis of capsid portal protein and terminase functional domains: interaction sites required for DNA packaging in bacteriophage T4.</title>
        <authorList>
            <person name="Lin H."/>
            <person name="Rao V.B."/>
            <person name="Black L.W."/>
        </authorList>
    </citation>
    <scope>INTERACTION WITH THE PORTAL PROTEIN</scope>
</reference>
<reference key="7">
    <citation type="journal article" date="2000" name="J. Biol. Chem.">
        <title>Biochemical characterization of an ATPase activity associated with the large packaging subunit gp17 from bacteriophage T4.</title>
        <authorList>
            <person name="Leffers G."/>
            <person name="Rao V.B."/>
        </authorList>
    </citation>
    <scope>BIOPHYSICOCHEMICAL PROPERTIES</scope>
    <scope>CATALYTIC ACTIVITY</scope>
    <scope>FUNCTION</scope>
    <scope>ACTIVITY REGULATION</scope>
    <scope>PHOSPHORYLATION</scope>
</reference>
<reference key="8">
    <citation type="journal article" date="2001" name="J. Mol. Biol.">
        <title>The N-terminal ATPase site in the large terminase protein gp17 is critically required for DNA packaging in bacteriophage T4.</title>
        <authorList>
            <person name="Rao V.B."/>
            <person name="Mitchell M.S."/>
        </authorList>
    </citation>
    <scope>DOMAIN</scope>
    <scope>FUNCTION</scope>
    <scope>MUTAGENESIS OF GLY-165; LYS-166 AND THR-167</scope>
</reference>
<reference key="9">
    <citation type="journal article" date="2002" name="Nucleic Acids Res.">
        <title>Sequence analysis of bacteriophage T4 DNA packaging/terminase genes 16 and 17 reveals a common ATPase center in the large subunit of viral terminases.</title>
        <authorList>
            <person name="Mitchell M.S."/>
            <person name="Matsuzaki S."/>
            <person name="Imai S."/>
            <person name="Rao V.B."/>
        </authorList>
    </citation>
    <scope>DOMAIN</scope>
</reference>
<reference key="10">
    <citation type="journal article" date="2002" name="J. Mol. Biol.">
        <title>A bipartite bacteriophage T4 SOC and HOC randomized peptide display library: detection and analysis of phage T4 terminase (gp17) and late sigma factor (gp55) interaction.</title>
        <authorList>
            <person name="Malys N."/>
            <person name="Chang D.Y."/>
            <person name="Baumann R.G."/>
            <person name="Xie D."/>
            <person name="Black L.W."/>
        </authorList>
    </citation>
    <scope>INTERACTION WITH GP55</scope>
</reference>
<reference key="11">
    <citation type="journal article" date="2003" name="J. Biol. Chem.">
        <title>Isolation and characterization of T4 bacteriophage gp17 terminase, a large subunit multimer with enhanced ATPase activity.</title>
        <authorList>
            <person name="Baumann R.G."/>
            <person name="Black L.W."/>
        </authorList>
    </citation>
    <scope>INTERACTION WITH THE TERMINASE SMALL SUBUNIT</scope>
    <scope>CATALYTIC ACTIVITY</scope>
    <scope>ACTIVITY REGULATION</scope>
    <scope>BIOPHYSICOCHEMICAL PROPERTIES</scope>
    <scope>FUNCTION</scope>
</reference>
<reference key="12">
    <citation type="journal article" date="2003" name="J. Mol. Biol.">
        <title>Defining the ATPase center of bacteriophage T4 DNA packaging machine: requirement for a catalytic glutamate residue in the large terminase protein gp17.</title>
        <authorList>
            <person name="Goetzinger K.R."/>
            <person name="Rao V.B."/>
        </authorList>
    </citation>
    <scope>MUTAGENESIS OF GLU-256</scope>
    <scope>ACTIVE SITE</scope>
</reference>
<reference key="13">
    <citation type="journal article" date="2004" name="J. Biol. Chem.">
        <title>The functional domains of bacteriophage t4 terminase.</title>
        <authorList>
            <person name="Kanamaru S."/>
            <person name="Kondabagil K."/>
            <person name="Rossmann M.G."/>
            <person name="Rao V.B."/>
        </authorList>
    </citation>
    <scope>CATALYTIC ACTIVITY</scope>
    <scope>DOMAIN</scope>
</reference>
<reference key="14">
    <citation type="journal article" date="2006" name="J. Biol. Chem.">
        <title>Functional analysis of the bacteriophage T4 DNA-packaging ATPase motor.</title>
        <authorList>
            <person name="Mitchell M.S."/>
            <person name="Rao V.B."/>
        </authorList>
    </citation>
    <scope>MUTAGENESIS OF TYR-253 AND ASP-255</scope>
</reference>
<reference key="15">
    <citation type="journal article" date="2006" name="J. Mol. Biol.">
        <title>The DNA translocating ATPase of bacteriophage T4 packaging motor.</title>
        <authorList>
            <person name="Kondabagil K.R."/>
            <person name="Zhang Z."/>
            <person name="Rao V.B."/>
        </authorList>
    </citation>
    <scope>DOMAIN</scope>
    <scope>CATALYTIC ACTIVITY</scope>
    <scope>ACTIVITY REGULATION</scope>
    <scope>MUTAGENESIS OF LYS-166; ASP-255 AND GLU-256</scope>
</reference>
<reference key="16">
    <citation type="journal article" date="2008" name="Mol. Microbiol.">
        <title>The headful packaging nuclease of bacteriophage T4.</title>
        <authorList>
            <person name="Alam T.I."/>
            <person name="Draper B."/>
            <person name="Kondabagil K."/>
            <person name="Rentas F.J."/>
            <person name="Ghosh-Kumar M."/>
            <person name="Sun S."/>
            <person name="Rossmann M.G."/>
            <person name="Rao V.B."/>
        </authorList>
    </citation>
    <scope>CATALYTIC ACTIVITY</scope>
    <scope>ACTIVE SITE</scope>
    <scope>COFACTOR</scope>
    <scope>MUTAGENESIS OF ASP-401; GLU-404; GLY-405; ASP-409; GLU-458 AND ASP-542</scope>
</reference>
<reference key="17">
    <citation type="journal article" date="2008" name="Annu. Rev. Genet.">
        <title>The bacteriophage DNA packaging motor.</title>
        <authorList>
            <person name="Rao V.B."/>
            <person name="Feiss M."/>
        </authorList>
    </citation>
    <scope>REVIEW</scope>
</reference>
<reference key="18">
    <citation type="journal article" date="2008" name="J. Mol. Biol.">
        <title>The ATPase domain of the large terminase protein, gp17, from bacteriophage T4 binds DNA: implications to the DNA packaging mechanism.</title>
        <authorList>
            <person name="Alam T.I."/>
            <person name="Rao V.B."/>
        </authorList>
    </citation>
    <scope>DNA-BINDING</scope>
    <scope>DOMAIN</scope>
</reference>
<reference key="19">
    <citation type="journal article" date="2012" name="J. Virol.">
        <title>Portal-large terminase interactions of the bacteriophage T4 DNA packaging machine implicate a molecular lever mechanism for coupling ATPase to DNA translocation.</title>
        <authorList>
            <person name="Hegde S."/>
            <person name="Padilla-Sanchez V."/>
            <person name="Draper B."/>
            <person name="Rao V.B."/>
        </authorList>
    </citation>
    <scope>INTERACTION WITH THE PORTAL PROTEIN</scope>
    <scope>DOMAIN</scope>
</reference>
<reference key="20">
    <citation type="journal article" date="2007" name="Mol. Cell">
        <title>The structure of the ATPase that powers DNA packaging into bacteriophage T4 procapsids.</title>
        <authorList>
            <person name="Sun S."/>
            <person name="Kondabagil K."/>
            <person name="Gentz P.M."/>
            <person name="Rossmann M.G."/>
            <person name="Rao V.B."/>
        </authorList>
    </citation>
    <scope>X-RAY CRYSTALLOGRAPHY (1.88 ANGSTROMS) OF 1-360</scope>
    <scope>ACTIVE SITE</scope>
    <scope>MUTAGENESIS OF ASP-255 AND GLU-256</scope>
    <scope>COFACTOR</scope>
</reference>
<reference key="21">
    <citation type="journal article" date="2008" name="Cell">
        <title>The structure of the phage T4 DNA packaging motor suggests a mechanism dependent on electrostatic forces.</title>
        <authorList>
            <person name="Sun S."/>
            <person name="Kondabagil K."/>
            <person name="Draper B."/>
            <person name="Alam T.I."/>
            <person name="Bowman V.D."/>
            <person name="Zhang Z."/>
            <person name="Hegde S."/>
            <person name="Fokine A."/>
            <person name="Rossmann M.G."/>
            <person name="Rao V.B."/>
        </authorList>
    </citation>
    <scope>X-RAY CRYSTALLOGRAPHY (2.8 ANGSTROMS) OF 1-567</scope>
    <scope>COFACTOR</scope>
</reference>
<comment type="function">
    <molecule>Isoform Terminase large subunit</molecule>
    <text evidence="1 3 4 7 17">The terminase large subunit acts as an ATP driven molecular motor necessary for viral DNA translocation into empty capsids and as an endonuclease that cuts the viral genome to initiate and to end a packaging reaction (PubMed:10967092, PubMed:11846554, PubMed:12466275). The terminase lies at a unique vertex of the procapsid and is composed of two subunits, a small terminase subunit involved in viral DNA recognition (packaging sequence), and a large terminase subunit possessing endonucleolytic and ATPase activities (PubMed:12466275). Both terminase subunits heterooligomerize and are docked on the portal protein to form the packaging machine. The terminase large subunit exhibits endonuclease activity and cleaves the viral genome concatemer once the capsid is full (headful packaging) (PubMed:10967092, PubMed:12466275, PubMed:8063105). Once the capsid is packaged with the DNA, the terminase complex is substituted by the tail.</text>
</comment>
<comment type="cofactor">
    <molecule>Isoform Terminase large subunit</molecule>
    <cofactor evidence="1 14 25">
        <name>Mg(2+)</name>
        <dbReference type="ChEBI" id="CHEBI:18420"/>
    </cofactor>
    <text evidence="1 12 15">ATPase activity requires 1 Mg(2+) ion per subunit (PubMed:17386269). Nuclease activity probably requires 2 Mg(2+) ions per subunit (PubMed:19109896).</text>
</comment>
<comment type="activity regulation">
    <molecule>Isoform Terminase large subunit</molecule>
    <text evidence="1 3 7 11">Stimulated up to 50 to 100-fold by the terminase small subunit (By similarity) (PubMed:10967092, PubMed:12466275, PubMed:16987527). Modestly activated by portal protein and single-stranded binding protein gp32 multimers (PubMed:12466275).</text>
</comment>
<comment type="biophysicochemical properties">
    <molecule>Isoform Terminase large subunit</molecule>
    <kinetics>
        <KM evidence="7">380 uM for ATP</KM>
        <KM evidence="3">256 uM for ATP</KM>
        <text evidence="3 7">The Km values for the ATPase activity were measured in presence of gp16.</text>
    </kinetics>
</comment>
<comment type="subunit">
    <molecule>Isoform Terminase large subunit</molecule>
    <text evidence="1 2 5 7 12 16">Interacts with the terminase small subunit; the active complex is composed of a pentamer of terminase large subunits and a dodecamer of terminase small subunits (PubMed:12466275, PubMed:17386269). Interacts with the portal protein (PubMed:10366503, PubMed:22345478). Interacts with the RNA polymerase sigma factor gp55 (By similarity) (PubMed:12051907).</text>
</comment>
<comment type="alternative products">
    <event type="alternative initiation"/>
    <isoform>
        <id>P17312-1</id>
        <name>Terminase large subunit</name>
        <sequence type="displayed"/>
    </isoform>
    <isoform>
        <id>P17312-2</id>
        <name>Gp17'A</name>
        <sequence type="described" ref="VSP_018679"/>
    </isoform>
    <isoform>
        <id>P17312-3</id>
        <name>Gp17'B</name>
        <sequence type="described" ref="VSP_018680"/>
    </isoform>
    <isoform>
        <id>P17312-4</id>
        <name>Gp17''</name>
        <sequence type="described" ref="VSP_018681"/>
    </isoform>
    <text evidence="18">Several shorter peptides are initiated at internal ribosome binding sites and translated in the same reading frame as gp17.</text>
</comment>
<comment type="domain">
    <molecule>Isoform Terminase large subunit</molecule>
    <text evidence="4 6 9 11 13 17 19">The N-terminus contains an ATPase domain (PubMed:11846554, PubMed:12235385, PubMed:15265872, PubMed:16987527). The ATPase domain binds to dsDNA in a sequence non-specific manner (PubMed:18234214). The C-terminus contains an endonuclease domain (PubMed:12235385, PubMed:15265872, PubMed:16987527). The terminase nuclease domain binds ssDNA but not dsDNA (PubMed:8063105, PubMed:9533879).</text>
</comment>
<comment type="PTM">
    <molecule>Isoform Terminase large subunit</molecule>
    <text evidence="3">Phosphorylated.</text>
</comment>
<comment type="similarity">
    <text evidence="1">Belongs to the Tequatrovirus large terminase family.</text>
</comment>
<protein>
    <recommendedName>
        <fullName evidence="1">Terminase, large subunit</fullName>
    </recommendedName>
    <alternativeName>
        <fullName evidence="1">DNA-packaging protein</fullName>
    </alternativeName>
    <alternativeName>
        <fullName>Gene product 17</fullName>
        <shortName>gp17</shortName>
    </alternativeName>
    <domain>
        <recommendedName>
            <fullName evidence="1">ATPase</fullName>
            <ecNumber evidence="1 3 7 11 19">3.6.4.-</ecNumber>
        </recommendedName>
    </domain>
    <domain>
        <recommendedName>
            <fullName evidence="1">Endonuclease</fullName>
            <ecNumber evidence="1 21 22 23 24 26 27">3.1.21.-</ecNumber>
        </recommendedName>
    </domain>
</protein>
<accession>P17312</accession>
<accession>Q9T0U4</accession>
<accession>Q9T0U5</accession>
<accession>Q9T0U6</accession>
<organismHost>
    <name type="scientific">Escherichia coli</name>
    <dbReference type="NCBI Taxonomy" id="562"/>
</organismHost>
<keyword id="KW-0002">3D-structure</keyword>
<keyword id="KW-0024">Alternative initiation</keyword>
<keyword id="KW-0067">ATP-binding</keyword>
<keyword id="KW-0255">Endonuclease</keyword>
<keyword id="KW-0378">Hydrolase</keyword>
<keyword id="KW-0460">Magnesium</keyword>
<keyword id="KW-0479">Metal-binding</keyword>
<keyword id="KW-0540">Nuclease</keyword>
<keyword id="KW-0547">Nucleotide-binding</keyword>
<keyword id="KW-1185">Reference proteome</keyword>
<keyword id="KW-0231">Viral genome packaging</keyword>
<keyword id="KW-1188">Viral release from host cell</keyword>
<sequence>MEQPINVLNDFHPLNEAGKILIKHPSLAERKDEDGIHWIKSQWDGKWYPEKFSDYLRLHKIVKIPNNSDKPELFQTYKDKNNKRSRYMGLPNLKRANIKTQWTREMVEEWKKCRDDIVYFAETYCAITHIDYGVIKVQLRDYQRDMLKIMSSKRMTVCNLSRQLGKTTVVAIFLAHFVCFNKDKAVGILAHKGSMSAEVLDRTKQAIELLPDFLQPGIVEWNKGSIELDNGSSIGAYASSPDAVRGNSFAMIYIDECAFIPNFHDSWLAIQPVISSGRRSKIIITTTPNGLNHFYDIWTAAVEGKSGFEPYTAIWNSVKERLYNDEDIFDDGWQWSIQTINGSSLAQFRQEHTAAFEGTSGTLISGMKLAVMDFIEVTPDDHGFHQFKKPEPDRKYIATLDCSEGRGQDYHALHIIDVTDDVWEQVGVLHSNTISHLILPDIVMRYLVEYNECPVYIELNSTGVSVAKSLYMDLEYEGVICDSYTDLGMKQTKRTKAVGCSTLKDLIEKDKLIIHHRATIQEFRTFSEKGVSWAAEEGYHDDLVMSLVIFGWLSTQSKFIDYADKDDMRLASEVFSKELQDMSDDYAPVIFVDSVHSAEYVPVSHGMSMV</sequence>
<feature type="chain" id="PRO_0000003331" description="Terminase, large subunit">
    <location>
        <begin position="1"/>
        <end position="610"/>
    </location>
</feature>
<feature type="region of interest" description="ssDNA-binding" evidence="1 19">
    <location>
        <begin position="30"/>
        <end position="94"/>
    </location>
</feature>
<feature type="region of interest" description="ATPase activity" evidence="1 6">
    <location>
        <begin position="131"/>
        <end position="301"/>
    </location>
</feature>
<feature type="region of interest" description="Binding to the portal protein" evidence="1 16">
    <location>
        <begin position="328"/>
        <end position="352"/>
    </location>
</feature>
<feature type="region of interest" description="Nuclease activity" evidence="1 6">
    <location>
        <begin position="360"/>
        <end position="559"/>
    </location>
</feature>
<feature type="short sequence motif" description="Walker A motif" evidence="1 4 6">
    <location>
        <begin position="161"/>
        <end position="167"/>
    </location>
</feature>
<feature type="short sequence motif" description="Walker B motif" evidence="1 6">
    <location>
        <begin position="251"/>
        <end position="256"/>
    </location>
</feature>
<feature type="short sequence motif" description="ATPase coupling" evidence="1 6">
    <location>
        <begin position="285"/>
        <end position="287"/>
    </location>
</feature>
<feature type="active site" description="For ATPase activity" evidence="1 8 12">
    <location>
        <position position="256"/>
    </location>
</feature>
<feature type="binding site" evidence="1 12">
    <location>
        <position position="138"/>
    </location>
    <ligand>
        <name>ATP</name>
        <dbReference type="ChEBI" id="CHEBI:30616"/>
    </ligand>
</feature>
<feature type="binding site" evidence="1 12">
    <location>
        <position position="143"/>
    </location>
    <ligand>
        <name>ATP</name>
        <dbReference type="ChEBI" id="CHEBI:30616"/>
    </ligand>
</feature>
<feature type="binding site" evidence="1 12">
    <location>
        <position position="202"/>
    </location>
    <ligand>
        <name>ATP</name>
        <dbReference type="ChEBI" id="CHEBI:30616"/>
    </ligand>
</feature>
<feature type="binding site" evidence="1 24 25">
    <location>
        <position position="401"/>
    </location>
    <ligand>
        <name>Mg(2+)</name>
        <dbReference type="ChEBI" id="CHEBI:18420"/>
        <label>1</label>
        <note>catalytic; for nuclease activity</note>
    </ligand>
</feature>
<feature type="binding site" evidence="1 24 25">
    <location>
        <position position="401"/>
    </location>
    <ligand>
        <name>Mg(2+)</name>
        <dbReference type="ChEBI" id="CHEBI:18420"/>
        <label>2</label>
        <note>catalytic; for nuclease activity</note>
    </ligand>
</feature>
<feature type="binding site" evidence="1 24 25">
    <location>
        <position position="458"/>
    </location>
    <ligand>
        <name>Mg(2+)</name>
        <dbReference type="ChEBI" id="CHEBI:18420"/>
        <label>2</label>
        <note>catalytic; for nuclease activity</note>
    </ligand>
</feature>
<feature type="binding site" evidence="1 24 25">
    <location>
        <position position="542"/>
    </location>
    <ligand>
        <name>Mg(2+)</name>
        <dbReference type="ChEBI" id="CHEBI:18420"/>
        <label>1</label>
        <note>catalytic; for nuclease activity</note>
    </ligand>
</feature>
<feature type="site" description="Modulates nuclease activity" evidence="1 14">
    <location>
        <position position="409"/>
    </location>
</feature>
<feature type="splice variant" id="VSP_018681" description="In isoform Gp17''." evidence="20">
    <location>
        <begin position="1"/>
        <end position="194"/>
    </location>
</feature>
<feature type="splice variant" id="VSP_018680" description="In isoform Gp17'B." evidence="20">
    <location>
        <begin position="1"/>
        <end position="105"/>
    </location>
</feature>
<feature type="splice variant" id="VSP_018679" description="In isoform Gp17'A." evidence="20">
    <location>
        <begin position="1"/>
        <end position="87"/>
    </location>
</feature>
<feature type="mutagenesis site" description="Complete loss of in vitro DNA packaging activity but not the endonuclease activity." evidence="4">
    <original>G</original>
    <variation>A</variation>
    <location>
        <position position="165"/>
    </location>
</feature>
<feature type="mutagenesis site" description="Complete loss of in vitro DNA packaging activity. No effect on in vivo terminase activity. Loss of terminase small subunit-stimulated ATPase activity." evidence="4">
    <original>K</original>
    <variation>G</variation>
    <location>
        <position position="166"/>
    </location>
</feature>
<feature type="mutagenesis site" description="Complete loss of in vitro DNA packaging activity but not the endonuclease activity." evidence="4 11">
    <original>K</original>
    <variation>R</variation>
    <location>
        <position position="166"/>
    </location>
</feature>
<feature type="mutagenesis site" description="Complete loss of in vitro DNA packaging activity but not the endonuclease activity." evidence="4">
    <original>T</original>
    <variation>A</variation>
    <location>
        <position position="167"/>
    </location>
</feature>
<feature type="mutagenesis site" description="Complete loss of terminase small subunit-stimulated ATPase activity." evidence="10 12">
    <original>Y</original>
    <variation>A</variation>
    <variation>G</variation>
    <variation>K</variation>
    <variation>P</variation>
    <variation>R</variation>
    <location>
        <position position="253"/>
    </location>
</feature>
<feature type="mutagenesis site" description="Almost complete loss of terminase small subunit-stimulated ATPase activity." evidence="10 11 12">
    <original>D</original>
    <variation>E</variation>
    <location>
        <position position="255"/>
    </location>
</feature>
<feature type="mutagenesis site" description="Complete loss of terminase small subunit-stimulated ATPase activity." evidence="10">
    <original>D</original>
    <variation>N</variation>
    <variation>T</variation>
    <variation>V</variation>
    <location>
        <position position="255"/>
    </location>
</feature>
<feature type="mutagenesis site" description="Complete loss of terminase small subunit-stimulated ATPase activity and in vitro DNA packaging activity. No effect on ATP binding and endonuclease functions." evidence="8 11 12">
    <original>E</original>
    <variation>D</variation>
    <location>
        <position position="256"/>
    </location>
</feature>
<feature type="mutagenesis site" description="Complete loss of terminase small subunit-stimulated ATPase activity and in vitro DNA packaging activity. No effect on ATP binding and endonuclease functions." evidence="8">
    <original>E</original>
    <variation>Q</variation>
    <location>
        <position position="256"/>
    </location>
</feature>
<feature type="mutagenesis site" description="Complete loss of terminase small subunit-stimulated ATPase activity and in vitro DNA packaging activity. No effect on ATP binding and endonuclease functions." evidence="8 12">
    <original>E</original>
    <variation>V</variation>
    <location>
        <position position="256"/>
    </location>
</feature>
<feature type="mutagenesis site" description="Complete loss of nuclease activity. Almost no circular DNA packaging." evidence="14">
    <original>D</original>
    <variation>N</variation>
    <location>
        <position position="401"/>
    </location>
</feature>
<feature type="mutagenesis site" description="Complete loss of nuclease activity. Almost no circular DNA packaging." evidence="14">
    <original>E</original>
    <variation>N</variation>
    <location>
        <position position="404"/>
    </location>
</feature>
<feature type="mutagenesis site" description="Complete loss of nuclease activity. Almost no circular DNA packaging." evidence="14">
    <original>G</original>
    <variation>V</variation>
    <location>
        <position position="405"/>
    </location>
</feature>
<feature type="mutagenesis site" description="Enhanced nuclease activity. Normal circular DNA packaging." evidence="14">
    <original>D</original>
    <variation>N</variation>
    <location>
        <position position="409"/>
    </location>
</feature>
<feature type="mutagenesis site" description="Complete loss of nuclease activity." evidence="14">
    <original>E</original>
    <variation>A</variation>
    <location>
        <position position="458"/>
    </location>
</feature>
<feature type="mutagenesis site" description="Complete loss of nuclease activity. Unable to package circular plasmid DNA but packages linear DNA." evidence="14">
    <original>D</original>
    <variation>A</variation>
    <location>
        <position position="542"/>
    </location>
</feature>
<feature type="helix" evidence="30">
    <location>
        <begin position="13"/>
        <end position="15"/>
    </location>
</feature>
<feature type="strand" evidence="30">
    <location>
        <begin position="17"/>
        <end position="19"/>
    </location>
</feature>
<feature type="helix" evidence="29">
    <location>
        <begin position="25"/>
        <end position="27"/>
    </location>
</feature>
<feature type="strand" evidence="29">
    <location>
        <begin position="30"/>
        <end position="33"/>
    </location>
</feature>
<feature type="strand" evidence="29">
    <location>
        <begin position="36"/>
        <end position="40"/>
    </location>
</feature>
<feature type="turn" evidence="29">
    <location>
        <begin position="42"/>
        <end position="44"/>
    </location>
</feature>
<feature type="strand" evidence="29">
    <location>
        <begin position="47"/>
        <end position="51"/>
    </location>
</feature>
<feature type="helix" evidence="29">
    <location>
        <begin position="52"/>
        <end position="57"/>
    </location>
</feature>
<feature type="strand" evidence="29">
    <location>
        <begin position="67"/>
        <end position="69"/>
    </location>
</feature>
<feature type="helix" evidence="28">
    <location>
        <begin position="71"/>
        <end position="73"/>
    </location>
</feature>
<feature type="turn" evidence="29">
    <location>
        <begin position="74"/>
        <end position="76"/>
    </location>
</feature>
<feature type="strand" evidence="29">
    <location>
        <begin position="85"/>
        <end position="87"/>
    </location>
</feature>
<feature type="strand" evidence="29">
    <location>
        <begin position="90"/>
        <end position="95"/>
    </location>
</feature>
<feature type="helix" evidence="29">
    <location>
        <begin position="104"/>
        <end position="115"/>
    </location>
</feature>
<feature type="helix" evidence="29">
    <location>
        <begin position="117"/>
        <end position="124"/>
    </location>
</feature>
<feature type="strand" evidence="29">
    <location>
        <begin position="126"/>
        <end position="128"/>
    </location>
</feature>
<feature type="strand" evidence="29">
    <location>
        <begin position="130"/>
        <end position="132"/>
    </location>
</feature>
<feature type="strand" evidence="29">
    <location>
        <begin position="134"/>
        <end position="136"/>
    </location>
</feature>
<feature type="helix" evidence="29">
    <location>
        <begin position="141"/>
        <end position="152"/>
    </location>
</feature>
<feature type="strand" evidence="29">
    <location>
        <begin position="153"/>
        <end position="160"/>
    </location>
</feature>
<feature type="strand" evidence="29">
    <location>
        <begin position="162"/>
        <end position="164"/>
    </location>
</feature>
<feature type="helix" evidence="29">
    <location>
        <begin position="166"/>
        <end position="179"/>
    </location>
</feature>
<feature type="strand" evidence="29">
    <location>
        <begin position="180"/>
        <end position="183"/>
    </location>
</feature>
<feature type="strand" evidence="29">
    <location>
        <begin position="185"/>
        <end position="192"/>
    </location>
</feature>
<feature type="helix" evidence="29">
    <location>
        <begin position="193"/>
        <end position="209"/>
    </location>
</feature>
<feature type="turn" evidence="29">
    <location>
        <begin position="212"/>
        <end position="214"/>
    </location>
</feature>
<feature type="strand" evidence="29">
    <location>
        <begin position="218"/>
        <end position="221"/>
    </location>
</feature>
<feature type="strand" evidence="29">
    <location>
        <begin position="223"/>
        <end position="228"/>
    </location>
</feature>
<feature type="strand" evidence="29">
    <location>
        <begin position="233"/>
        <end position="238"/>
    </location>
</feature>
<feature type="helix" evidence="29">
    <location>
        <begin position="241"/>
        <end position="245"/>
    </location>
</feature>
<feature type="strand" evidence="29">
    <location>
        <begin position="250"/>
        <end position="256"/>
    </location>
</feature>
<feature type="helix" evidence="29">
    <location>
        <begin position="257"/>
        <end position="259"/>
    </location>
</feature>
<feature type="helix" evidence="29">
    <location>
        <begin position="263"/>
        <end position="275"/>
    </location>
</feature>
<feature type="turn" evidence="30">
    <location>
        <begin position="276"/>
        <end position="278"/>
    </location>
</feature>
<feature type="strand" evidence="29">
    <location>
        <begin position="281"/>
        <end position="286"/>
    </location>
</feature>
<feature type="strand" evidence="29">
    <location>
        <begin position="290"/>
        <end position="292"/>
    </location>
</feature>
<feature type="helix" evidence="29">
    <location>
        <begin position="293"/>
        <end position="302"/>
    </location>
</feature>
<feature type="strand" evidence="30">
    <location>
        <begin position="305"/>
        <end position="307"/>
    </location>
</feature>
<feature type="strand" evidence="29">
    <location>
        <begin position="309"/>
        <end position="313"/>
    </location>
</feature>
<feature type="helix" evidence="29">
    <location>
        <begin position="315"/>
        <end position="317"/>
    </location>
</feature>
<feature type="helix" evidence="29">
    <location>
        <begin position="319"/>
        <end position="322"/>
    </location>
</feature>
<feature type="strand" evidence="29">
    <location>
        <begin position="327"/>
        <end position="329"/>
    </location>
</feature>
<feature type="helix" evidence="29">
    <location>
        <begin position="333"/>
        <end position="341"/>
    </location>
</feature>
<feature type="helix" evidence="29">
    <location>
        <begin position="345"/>
        <end position="352"/>
    </location>
</feature>
<feature type="strand" evidence="31">
    <location>
        <begin position="361"/>
        <end position="364"/>
    </location>
</feature>
<feature type="helix" evidence="31">
    <location>
        <begin position="366"/>
        <end position="369"/>
    </location>
</feature>
<feature type="strand" evidence="31">
    <location>
        <begin position="381"/>
        <end position="388"/>
    </location>
</feature>
<feature type="strand" evidence="31">
    <location>
        <begin position="396"/>
        <end position="401"/>
    </location>
</feature>
<feature type="strand" evidence="31">
    <location>
        <begin position="404"/>
        <end position="406"/>
    </location>
</feature>
<feature type="strand" evidence="31">
    <location>
        <begin position="411"/>
        <end position="417"/>
    </location>
</feature>
<feature type="strand" evidence="31">
    <location>
        <begin position="419"/>
        <end position="434"/>
    </location>
</feature>
<feature type="turn" evidence="31">
    <location>
        <begin position="436"/>
        <end position="438"/>
    </location>
</feature>
<feature type="helix" evidence="31">
    <location>
        <begin position="439"/>
        <end position="449"/>
    </location>
</feature>
<feature type="strand" evidence="31">
    <location>
        <begin position="455"/>
        <end position="460"/>
    </location>
</feature>
<feature type="helix" evidence="31">
    <location>
        <begin position="461"/>
        <end position="471"/>
    </location>
</feature>
<feature type="strand" evidence="31">
    <location>
        <begin position="482"/>
        <end position="485"/>
    </location>
</feature>
<feature type="strand" evidence="31">
    <location>
        <begin position="487"/>
        <end position="490"/>
    </location>
</feature>
<feature type="helix" evidence="31">
    <location>
        <begin position="493"/>
        <end position="508"/>
    </location>
</feature>
<feature type="strand" evidence="31">
    <location>
        <begin position="511"/>
        <end position="513"/>
    </location>
</feature>
<feature type="helix" evidence="31">
    <location>
        <begin position="517"/>
        <end position="523"/>
    </location>
</feature>
<feature type="strand" evidence="31">
    <location>
        <begin position="525"/>
        <end position="529"/>
    </location>
</feature>
<feature type="strand" evidence="31">
    <location>
        <begin position="532"/>
        <end position="535"/>
    </location>
</feature>
<feature type="helix" evidence="31">
    <location>
        <begin position="542"/>
        <end position="555"/>
    </location>
</feature>
<feature type="helix" evidence="31">
    <location>
        <begin position="557"/>
        <end position="559"/>
    </location>
</feature>
<gene>
    <name type="primary">17</name>
</gene>
<evidence type="ECO:0000255" key="1">
    <source>
        <dbReference type="HAMAP-Rule" id="MF_04146"/>
    </source>
</evidence>
<evidence type="ECO:0000269" key="2">
    <source>
    </source>
</evidence>
<evidence type="ECO:0000269" key="3">
    <source>
    </source>
</evidence>
<evidence type="ECO:0000269" key="4">
    <source>
    </source>
</evidence>
<evidence type="ECO:0000269" key="5">
    <source>
    </source>
</evidence>
<evidence type="ECO:0000269" key="6">
    <source>
    </source>
</evidence>
<evidence type="ECO:0000269" key="7">
    <source>
    </source>
</evidence>
<evidence type="ECO:0000269" key="8">
    <source>
    </source>
</evidence>
<evidence type="ECO:0000269" key="9">
    <source>
    </source>
</evidence>
<evidence type="ECO:0000269" key="10">
    <source>
    </source>
</evidence>
<evidence type="ECO:0000269" key="11">
    <source>
    </source>
</evidence>
<evidence type="ECO:0000269" key="12">
    <source>
    </source>
</evidence>
<evidence type="ECO:0000269" key="13">
    <source>
    </source>
</evidence>
<evidence type="ECO:0000269" key="14">
    <source>
    </source>
</evidence>
<evidence type="ECO:0000269" key="15">
    <source>
    </source>
</evidence>
<evidence type="ECO:0000269" key="16">
    <source>
    </source>
</evidence>
<evidence type="ECO:0000269" key="17">
    <source>
    </source>
</evidence>
<evidence type="ECO:0000269" key="18">
    <source>
    </source>
</evidence>
<evidence type="ECO:0000269" key="19">
    <source>
    </source>
</evidence>
<evidence type="ECO:0000305" key="20"/>
<evidence type="ECO:0000305" key="21">
    <source>
    </source>
</evidence>
<evidence type="ECO:0000305" key="22">
    <source>
    </source>
</evidence>
<evidence type="ECO:0000305" key="23">
    <source>
    </source>
</evidence>
<evidence type="ECO:0000305" key="24">
    <source>
    </source>
</evidence>
<evidence type="ECO:0000305" key="25">
    <source>
    </source>
</evidence>
<evidence type="ECO:0000305" key="26">
    <source>
    </source>
</evidence>
<evidence type="ECO:0000305" key="27">
    <source>
    </source>
</evidence>
<evidence type="ECO:0007829" key="28">
    <source>
        <dbReference type="PDB" id="2O0H"/>
    </source>
</evidence>
<evidence type="ECO:0007829" key="29">
    <source>
        <dbReference type="PDB" id="2O0J"/>
    </source>
</evidence>
<evidence type="ECO:0007829" key="30">
    <source>
        <dbReference type="PDB" id="2O0K"/>
    </source>
</evidence>
<evidence type="ECO:0007829" key="31">
    <source>
        <dbReference type="PDB" id="3CPE"/>
    </source>
</evidence>
<dbReference type="EC" id="3.6.4.-" evidence="1 3 7 11 19"/>
<dbReference type="EC" id="3.1.21.-" evidence="1 21 22 23 24 26 27"/>
<dbReference type="EMBL" id="X52394">
    <property type="protein sequence ID" value="CAA36641.1"/>
    <property type="molecule type" value="Genomic_DNA"/>
</dbReference>
<dbReference type="EMBL" id="AF158101">
    <property type="protein sequence ID" value="AAD42422.1"/>
    <property type="molecule type" value="Genomic_DNA"/>
</dbReference>
<dbReference type="EMBL" id="AF158101">
    <property type="protein sequence ID" value="AAD42684.1"/>
    <property type="molecule type" value="Genomic_DNA"/>
</dbReference>
<dbReference type="EMBL" id="AF158101">
    <property type="protein sequence ID" value="AAD42685.1"/>
    <property type="molecule type" value="Genomic_DNA"/>
</dbReference>
<dbReference type="EMBL" id="AF158101">
    <property type="protein sequence ID" value="AAD42686.1"/>
    <property type="molecule type" value="Genomic_DNA"/>
</dbReference>
<dbReference type="PIR" id="JU0287">
    <property type="entry name" value="GVBPT4"/>
</dbReference>
<dbReference type="RefSeq" id="NP_049776.1">
    <property type="nucleotide sequence ID" value="NC_000866.4"/>
</dbReference>
<dbReference type="RefSeq" id="NP_049777.1">
    <property type="nucleotide sequence ID" value="NC_000866.4"/>
</dbReference>
<dbReference type="RefSeq" id="NP_049778.1">
    <property type="nucleotide sequence ID" value="NC_000866.4"/>
</dbReference>
<dbReference type="RefSeq" id="NP_049779.1">
    <property type="nucleotide sequence ID" value="NC_000866.4"/>
</dbReference>
<dbReference type="PDB" id="2O0H">
    <property type="method" value="X-ray"/>
    <property type="resolution" value="1.88 A"/>
    <property type="chains" value="A=1-360"/>
</dbReference>
<dbReference type="PDB" id="2O0J">
    <property type="method" value="X-ray"/>
    <property type="resolution" value="1.80 A"/>
    <property type="chains" value="A=1-360"/>
</dbReference>
<dbReference type="PDB" id="2O0K">
    <property type="method" value="X-ray"/>
    <property type="resolution" value="2.50 A"/>
    <property type="chains" value="A=1-360"/>
</dbReference>
<dbReference type="PDB" id="3CPE">
    <property type="method" value="X-ray"/>
    <property type="resolution" value="2.80 A"/>
    <property type="chains" value="A=1-567"/>
</dbReference>
<dbReference type="PDB" id="3EZK">
    <property type="method" value="EM"/>
    <property type="resolution" value="34.00 A"/>
    <property type="chains" value="A/B/C/D/E=1-577"/>
</dbReference>
<dbReference type="PDBsum" id="2O0H"/>
<dbReference type="PDBsum" id="2O0J"/>
<dbReference type="PDBsum" id="2O0K"/>
<dbReference type="PDBsum" id="3CPE"/>
<dbReference type="PDBsum" id="3EZK"/>
<dbReference type="SMR" id="P17312"/>
<dbReference type="DIP" id="DIP-60322N"/>
<dbReference type="IntAct" id="P17312">
    <property type="interactions" value="1"/>
</dbReference>
<dbReference type="GeneID" id="1258545"/>
<dbReference type="GeneID" id="1258647"/>
<dbReference type="GeneID" id="1258656"/>
<dbReference type="GeneID" id="1258675"/>
<dbReference type="KEGG" id="vg:1258545"/>
<dbReference type="KEGG" id="vg:1258647"/>
<dbReference type="KEGG" id="vg:1258656"/>
<dbReference type="KEGG" id="vg:1258675"/>
<dbReference type="OrthoDB" id="2011at10239"/>
<dbReference type="EvolutionaryTrace" id="P17312"/>
<dbReference type="Proteomes" id="UP000009087">
    <property type="component" value="Segment"/>
</dbReference>
<dbReference type="GO" id="GO:0098009">
    <property type="term" value="C:viral terminase, large subunit"/>
    <property type="evidence" value="ECO:0000314"/>
    <property type="project" value="UniProtKB"/>
</dbReference>
<dbReference type="GO" id="GO:0005524">
    <property type="term" value="F:ATP binding"/>
    <property type="evidence" value="ECO:0007669"/>
    <property type="project" value="UniProtKB-KW"/>
</dbReference>
<dbReference type="GO" id="GO:0016887">
    <property type="term" value="F:ATP hydrolysis activity"/>
    <property type="evidence" value="ECO:0000315"/>
    <property type="project" value="CACAO"/>
</dbReference>
<dbReference type="GO" id="GO:0004536">
    <property type="term" value="F:DNA nuclease activity"/>
    <property type="evidence" value="ECO:0000315"/>
    <property type="project" value="CACAO"/>
</dbReference>
<dbReference type="GO" id="GO:0004519">
    <property type="term" value="F:endonuclease activity"/>
    <property type="evidence" value="ECO:0007669"/>
    <property type="project" value="UniProtKB-UniRule"/>
</dbReference>
<dbReference type="GO" id="GO:0046872">
    <property type="term" value="F:metal ion binding"/>
    <property type="evidence" value="ECO:0007669"/>
    <property type="project" value="UniProtKB-UniRule"/>
</dbReference>
<dbReference type="GO" id="GO:0004518">
    <property type="term" value="F:nuclease activity"/>
    <property type="evidence" value="ECO:0000314"/>
    <property type="project" value="UniProtKB"/>
</dbReference>
<dbReference type="GO" id="GO:0051276">
    <property type="term" value="P:chromosome organization"/>
    <property type="evidence" value="ECO:0007669"/>
    <property type="project" value="UniProtKB-UniRule"/>
</dbReference>
<dbReference type="GO" id="GO:0019073">
    <property type="term" value="P:viral DNA genome packaging"/>
    <property type="evidence" value="ECO:0007669"/>
    <property type="project" value="UniProtKB-UniRule"/>
</dbReference>
<dbReference type="GO" id="GO:0019072">
    <property type="term" value="P:viral genome packaging"/>
    <property type="evidence" value="ECO:0000314"/>
    <property type="project" value="UniProtKB"/>
</dbReference>
<dbReference type="GO" id="GO:0046797">
    <property type="term" value="P:viral procapsid maturation"/>
    <property type="evidence" value="ECO:0000314"/>
    <property type="project" value="CACAO"/>
</dbReference>
<dbReference type="FunFam" id="3.40.50.300:FF:001414">
    <property type="entry name" value="Terminase DNA packaging enzyme large subunit"/>
    <property type="match status" value="1"/>
</dbReference>
<dbReference type="Gene3D" id="3.30.420.240">
    <property type="match status" value="1"/>
</dbReference>
<dbReference type="Gene3D" id="3.40.50.300">
    <property type="entry name" value="P-loop containing nucleotide triphosphate hydrolases"/>
    <property type="match status" value="1"/>
</dbReference>
<dbReference type="HAMAP" id="MF_04146">
    <property type="entry name" value="TERL_T4"/>
    <property type="match status" value="1"/>
</dbReference>
<dbReference type="InterPro" id="IPR027417">
    <property type="entry name" value="P-loop_NTPase"/>
</dbReference>
<dbReference type="InterPro" id="IPR035421">
    <property type="entry name" value="Terminase_6C"/>
</dbReference>
<dbReference type="InterPro" id="IPR044267">
    <property type="entry name" value="Terminase_large_su_gp17-like"/>
</dbReference>
<dbReference type="Pfam" id="PF17289">
    <property type="entry name" value="Terminase_6C"/>
    <property type="match status" value="1"/>
</dbReference>
<dbReference type="Pfam" id="PF03237">
    <property type="entry name" value="Terminase_6N"/>
    <property type="match status" value="1"/>
</dbReference>
<dbReference type="SUPFAM" id="SSF52540">
    <property type="entry name" value="P-loop containing nucleoside triphosphate hydrolases"/>
    <property type="match status" value="1"/>
</dbReference>
<name>TERL_BPT4</name>
<proteinExistence type="evidence at protein level"/>
<organism>
    <name type="scientific">Enterobacteria phage T4</name>
    <name type="common">Bacteriophage T4</name>
    <dbReference type="NCBI Taxonomy" id="10665"/>
    <lineage>
        <taxon>Viruses</taxon>
        <taxon>Duplodnaviria</taxon>
        <taxon>Heunggongvirae</taxon>
        <taxon>Uroviricota</taxon>
        <taxon>Caudoviricetes</taxon>
        <taxon>Straboviridae</taxon>
        <taxon>Tevenvirinae</taxon>
        <taxon>Tequatrovirus</taxon>
    </lineage>
</organism>